<feature type="chain" id="PRO_0000289431" description="Lipoprotein signal peptidase">
    <location>
        <begin position="1"/>
        <end position="163"/>
    </location>
</feature>
<feature type="transmembrane region" description="Helical" evidence="1">
    <location>
        <begin position="11"/>
        <end position="31"/>
    </location>
</feature>
<feature type="transmembrane region" description="Helical" evidence="1">
    <location>
        <begin position="64"/>
        <end position="84"/>
    </location>
</feature>
<feature type="transmembrane region" description="Helical" evidence="1">
    <location>
        <begin position="88"/>
        <end position="108"/>
    </location>
</feature>
<feature type="transmembrane region" description="Helical" evidence="1">
    <location>
        <begin position="131"/>
        <end position="151"/>
    </location>
</feature>
<feature type="active site" evidence="1">
    <location>
        <position position="118"/>
    </location>
</feature>
<feature type="active site" evidence="1">
    <location>
        <position position="136"/>
    </location>
</feature>
<reference key="1">
    <citation type="journal article" date="2007" name="PLoS ONE">
        <title>Molecular correlates of host specialization in Staphylococcus aureus.</title>
        <authorList>
            <person name="Herron-Olson L."/>
            <person name="Fitzgerald J.R."/>
            <person name="Musser J.M."/>
            <person name="Kapur V."/>
        </authorList>
    </citation>
    <scope>NUCLEOTIDE SEQUENCE [LARGE SCALE GENOMIC DNA]</scope>
    <source>
        <strain>bovine RF122 / ET3-1</strain>
    </source>
</reference>
<proteinExistence type="inferred from homology"/>
<name>LSPA_STAAB</name>
<dbReference type="EC" id="3.4.23.36" evidence="1"/>
<dbReference type="EMBL" id="AJ938182">
    <property type="protein sequence ID" value="CAI80749.1"/>
    <property type="molecule type" value="Genomic_DNA"/>
</dbReference>
<dbReference type="RefSeq" id="WP_000549210.1">
    <property type="nucleotide sequence ID" value="NC_007622.1"/>
</dbReference>
<dbReference type="SMR" id="Q2YXH2"/>
<dbReference type="KEGG" id="sab:SAB1060"/>
<dbReference type="HOGENOM" id="CLU_083252_3_0_9"/>
<dbReference type="UniPathway" id="UPA00665"/>
<dbReference type="GO" id="GO:0005886">
    <property type="term" value="C:plasma membrane"/>
    <property type="evidence" value="ECO:0007669"/>
    <property type="project" value="UniProtKB-SubCell"/>
</dbReference>
<dbReference type="GO" id="GO:0004190">
    <property type="term" value="F:aspartic-type endopeptidase activity"/>
    <property type="evidence" value="ECO:0007669"/>
    <property type="project" value="UniProtKB-UniRule"/>
</dbReference>
<dbReference type="GO" id="GO:0006508">
    <property type="term" value="P:proteolysis"/>
    <property type="evidence" value="ECO:0007669"/>
    <property type="project" value="UniProtKB-KW"/>
</dbReference>
<dbReference type="HAMAP" id="MF_00161">
    <property type="entry name" value="LspA"/>
    <property type="match status" value="1"/>
</dbReference>
<dbReference type="InterPro" id="IPR001872">
    <property type="entry name" value="Peptidase_A8"/>
</dbReference>
<dbReference type="NCBIfam" id="TIGR00077">
    <property type="entry name" value="lspA"/>
    <property type="match status" value="1"/>
</dbReference>
<dbReference type="PANTHER" id="PTHR33695">
    <property type="entry name" value="LIPOPROTEIN SIGNAL PEPTIDASE"/>
    <property type="match status" value="1"/>
</dbReference>
<dbReference type="PANTHER" id="PTHR33695:SF1">
    <property type="entry name" value="LIPOPROTEIN SIGNAL PEPTIDASE"/>
    <property type="match status" value="1"/>
</dbReference>
<dbReference type="Pfam" id="PF01252">
    <property type="entry name" value="Peptidase_A8"/>
    <property type="match status" value="1"/>
</dbReference>
<dbReference type="PRINTS" id="PR00781">
    <property type="entry name" value="LIPOSIGPTASE"/>
</dbReference>
<dbReference type="PROSITE" id="PS00855">
    <property type="entry name" value="SPASE_II"/>
    <property type="match status" value="1"/>
</dbReference>
<organism>
    <name type="scientific">Staphylococcus aureus (strain bovine RF122 / ET3-1)</name>
    <dbReference type="NCBI Taxonomy" id="273036"/>
    <lineage>
        <taxon>Bacteria</taxon>
        <taxon>Bacillati</taxon>
        <taxon>Bacillota</taxon>
        <taxon>Bacilli</taxon>
        <taxon>Bacillales</taxon>
        <taxon>Staphylococcaceae</taxon>
        <taxon>Staphylococcus</taxon>
    </lineage>
</organism>
<keyword id="KW-0064">Aspartyl protease</keyword>
<keyword id="KW-1003">Cell membrane</keyword>
<keyword id="KW-0378">Hydrolase</keyword>
<keyword id="KW-0472">Membrane</keyword>
<keyword id="KW-0645">Protease</keyword>
<keyword id="KW-0812">Transmembrane</keyword>
<keyword id="KW-1133">Transmembrane helix</keyword>
<protein>
    <recommendedName>
        <fullName evidence="1">Lipoprotein signal peptidase</fullName>
        <ecNumber evidence="1">3.4.23.36</ecNumber>
    </recommendedName>
    <alternativeName>
        <fullName evidence="1">Prolipoprotein signal peptidase</fullName>
    </alternativeName>
    <alternativeName>
        <fullName evidence="1">Signal peptidase II</fullName>
        <shortName evidence="1">SPase II</shortName>
    </alternativeName>
</protein>
<comment type="function">
    <text evidence="1">This protein specifically catalyzes the removal of signal peptides from prolipoproteins.</text>
</comment>
<comment type="catalytic activity">
    <reaction evidence="1">
        <text>Release of signal peptides from bacterial membrane prolipoproteins. Hydrolyzes -Xaa-Yaa-Zaa-|-(S,diacylglyceryl)Cys-, in which Xaa is hydrophobic (preferably Leu), and Yaa (Ala or Ser) and Zaa (Gly or Ala) have small, neutral side chains.</text>
        <dbReference type="EC" id="3.4.23.36"/>
    </reaction>
</comment>
<comment type="pathway">
    <text evidence="1">Protein modification; lipoprotein biosynthesis (signal peptide cleavage).</text>
</comment>
<comment type="subcellular location">
    <subcellularLocation>
        <location evidence="1">Cell membrane</location>
        <topology evidence="1">Multi-pass membrane protein</topology>
    </subcellularLocation>
</comment>
<comment type="similarity">
    <text evidence="1">Belongs to the peptidase A8 family.</text>
</comment>
<accession>Q2YXH2</accession>
<evidence type="ECO:0000255" key="1">
    <source>
        <dbReference type="HAMAP-Rule" id="MF_00161"/>
    </source>
</evidence>
<sequence length="163" mass="18314">MHKKYFIGTSILIAVFVVIFDQVTKYIIATTMKIGDSFEVIPHFLNITSHRNNGAAWGILSGKMTFFFIITIIILIALVYFFINDAQYNLFMQVAISLLFAGALGNFIDRVLTGEVVDFIDTNIFGYDFPIFNIADSSLTIGVILIIIALLKDTSNKKEKEVK</sequence>
<gene>
    <name evidence="1" type="primary">lspA</name>
    <name type="ordered locus">SAB1060</name>
</gene>